<name>TRMB_MYCGI</name>
<reference key="1">
    <citation type="submission" date="2007-04" db="EMBL/GenBank/DDBJ databases">
        <title>Complete sequence of chromosome of Mycobacterium gilvum PYR-GCK.</title>
        <authorList>
            <consortium name="US DOE Joint Genome Institute"/>
            <person name="Copeland A."/>
            <person name="Lucas S."/>
            <person name="Lapidus A."/>
            <person name="Barry K."/>
            <person name="Detter J.C."/>
            <person name="Glavina del Rio T."/>
            <person name="Hammon N."/>
            <person name="Israni S."/>
            <person name="Dalin E."/>
            <person name="Tice H."/>
            <person name="Pitluck S."/>
            <person name="Chain P."/>
            <person name="Malfatti S."/>
            <person name="Shin M."/>
            <person name="Vergez L."/>
            <person name="Schmutz J."/>
            <person name="Larimer F."/>
            <person name="Land M."/>
            <person name="Hauser L."/>
            <person name="Kyrpides N."/>
            <person name="Mikhailova N."/>
            <person name="Miller C."/>
            <person name="Richardson P."/>
        </authorList>
    </citation>
    <scope>NUCLEOTIDE SEQUENCE [LARGE SCALE GENOMIC DNA]</scope>
    <source>
        <strain>PYR-GCK</strain>
    </source>
</reference>
<protein>
    <recommendedName>
        <fullName evidence="2">tRNA (guanine-N(7)-)-methyltransferase</fullName>
        <ecNumber evidence="2">2.1.1.33</ecNumber>
    </recommendedName>
    <alternativeName>
        <fullName evidence="2">tRNA (guanine(46)-N(7))-methyltransferase</fullName>
    </alternativeName>
    <alternativeName>
        <fullName evidence="2">tRNA(m7G46)-methyltransferase</fullName>
    </alternativeName>
</protein>
<comment type="function">
    <text evidence="2">Catalyzes the formation of N(7)-methylguanine at position 46 (m7G46) in tRNA.</text>
</comment>
<comment type="catalytic activity">
    <reaction evidence="2">
        <text>guanosine(46) in tRNA + S-adenosyl-L-methionine = N(7)-methylguanosine(46) in tRNA + S-adenosyl-L-homocysteine</text>
        <dbReference type="Rhea" id="RHEA:42708"/>
        <dbReference type="Rhea" id="RHEA-COMP:10188"/>
        <dbReference type="Rhea" id="RHEA-COMP:10189"/>
        <dbReference type="ChEBI" id="CHEBI:57856"/>
        <dbReference type="ChEBI" id="CHEBI:59789"/>
        <dbReference type="ChEBI" id="CHEBI:74269"/>
        <dbReference type="ChEBI" id="CHEBI:74480"/>
        <dbReference type="EC" id="2.1.1.33"/>
    </reaction>
</comment>
<comment type="pathway">
    <text evidence="2">tRNA modification; N(7)-methylguanine-tRNA biosynthesis.</text>
</comment>
<comment type="similarity">
    <text evidence="2">Belongs to the class I-like SAM-binding methyltransferase superfamily. TrmB family.</text>
</comment>
<feature type="chain" id="PRO_1000084445" description="tRNA (guanine-N(7)-)-methyltransferase">
    <location>
        <begin position="1"/>
        <end position="263"/>
    </location>
</feature>
<feature type="region of interest" description="Disordered" evidence="3">
    <location>
        <begin position="1"/>
        <end position="33"/>
    </location>
</feature>
<feature type="active site" evidence="1">
    <location>
        <position position="169"/>
    </location>
</feature>
<feature type="binding site" evidence="2">
    <location>
        <position position="89"/>
    </location>
    <ligand>
        <name>S-adenosyl-L-methionine</name>
        <dbReference type="ChEBI" id="CHEBI:59789"/>
    </ligand>
</feature>
<feature type="binding site" evidence="2">
    <location>
        <position position="114"/>
    </location>
    <ligand>
        <name>S-adenosyl-L-methionine</name>
        <dbReference type="ChEBI" id="CHEBI:59789"/>
    </ligand>
</feature>
<feature type="binding site" evidence="2">
    <location>
        <position position="146"/>
    </location>
    <ligand>
        <name>S-adenosyl-L-methionine</name>
        <dbReference type="ChEBI" id="CHEBI:59789"/>
    </ligand>
</feature>
<feature type="binding site" evidence="2">
    <location>
        <position position="169"/>
    </location>
    <ligand>
        <name>S-adenosyl-L-methionine</name>
        <dbReference type="ChEBI" id="CHEBI:59789"/>
    </ligand>
</feature>
<feature type="binding site" evidence="2">
    <location>
        <position position="173"/>
    </location>
    <ligand>
        <name>substrate</name>
    </ligand>
</feature>
<feature type="binding site" evidence="2">
    <location>
        <position position="205"/>
    </location>
    <ligand>
        <name>substrate</name>
    </ligand>
</feature>
<feature type="binding site" evidence="2">
    <location>
        <begin position="242"/>
        <end position="245"/>
    </location>
    <ligand>
        <name>substrate</name>
    </ligand>
</feature>
<gene>
    <name evidence="2" type="primary">trmB</name>
    <name type="ordered locus">Mflv_0454</name>
</gene>
<organism>
    <name type="scientific">Mycolicibacterium gilvum (strain PYR-GCK)</name>
    <name type="common">Mycobacterium gilvum (strain PYR-GCK)</name>
    <dbReference type="NCBI Taxonomy" id="350054"/>
    <lineage>
        <taxon>Bacteria</taxon>
        <taxon>Bacillati</taxon>
        <taxon>Actinomycetota</taxon>
        <taxon>Actinomycetes</taxon>
        <taxon>Mycobacteriales</taxon>
        <taxon>Mycobacteriaceae</taxon>
        <taxon>Mycolicibacterium</taxon>
    </lineage>
</organism>
<evidence type="ECO:0000250" key="1"/>
<evidence type="ECO:0000255" key="2">
    <source>
        <dbReference type="HAMAP-Rule" id="MF_01057"/>
    </source>
</evidence>
<evidence type="ECO:0000256" key="3">
    <source>
        <dbReference type="SAM" id="MobiDB-lite"/>
    </source>
</evidence>
<sequence length="263" mass="28766">MSDHGRMHSTGSEVAAPVAPDPDTEGVHPHFNRRVTSFRARRSTISDGQQATWDRLWPQLGRQARDGDEPPGPLDTDAWFGRHAPVVLEIGCGTGTSTLAMAQAEPGIDVVAVEVYRRGLAQLLSAIDRTAATEHPVSNIRLIRGDGVDVLTHMFGSASLTGVRVFFPDPWPKARHHKRRLLQPDTMALIADRLRPGGVLHAATDHQGYAAHIAEVGDAEPRLRRVAMDSADLPMSVTRPVTKYERKALAGPVVTELLWERTP</sequence>
<keyword id="KW-0489">Methyltransferase</keyword>
<keyword id="KW-0949">S-adenosyl-L-methionine</keyword>
<keyword id="KW-0808">Transferase</keyword>
<keyword id="KW-0819">tRNA processing</keyword>
<dbReference type="EC" id="2.1.1.33" evidence="2"/>
<dbReference type="EMBL" id="CP000656">
    <property type="protein sequence ID" value="ABP42948.1"/>
    <property type="molecule type" value="Genomic_DNA"/>
</dbReference>
<dbReference type="SMR" id="A4T3S4"/>
<dbReference type="STRING" id="350054.Mflv_0454"/>
<dbReference type="KEGG" id="mgi:Mflv_0454"/>
<dbReference type="eggNOG" id="COG0220">
    <property type="taxonomic scope" value="Bacteria"/>
</dbReference>
<dbReference type="HOGENOM" id="CLU_050910_0_2_11"/>
<dbReference type="OrthoDB" id="9802090at2"/>
<dbReference type="UniPathway" id="UPA00989"/>
<dbReference type="GO" id="GO:0043527">
    <property type="term" value="C:tRNA methyltransferase complex"/>
    <property type="evidence" value="ECO:0007669"/>
    <property type="project" value="TreeGrafter"/>
</dbReference>
<dbReference type="GO" id="GO:0008176">
    <property type="term" value="F:tRNA (guanine(46)-N7)-methyltransferase activity"/>
    <property type="evidence" value="ECO:0007669"/>
    <property type="project" value="UniProtKB-UniRule"/>
</dbReference>
<dbReference type="CDD" id="cd02440">
    <property type="entry name" value="AdoMet_MTases"/>
    <property type="match status" value="1"/>
</dbReference>
<dbReference type="Gene3D" id="3.40.50.150">
    <property type="entry name" value="Vaccinia Virus protein VP39"/>
    <property type="match status" value="1"/>
</dbReference>
<dbReference type="HAMAP" id="MF_01057">
    <property type="entry name" value="tRNA_methyltr_TrmB"/>
    <property type="match status" value="1"/>
</dbReference>
<dbReference type="InterPro" id="IPR029063">
    <property type="entry name" value="SAM-dependent_MTases_sf"/>
</dbReference>
<dbReference type="InterPro" id="IPR003358">
    <property type="entry name" value="tRNA_(Gua-N-7)_MeTrfase_Trmb"/>
</dbReference>
<dbReference type="InterPro" id="IPR055361">
    <property type="entry name" value="tRNA_methyltr_TrmB_bact"/>
</dbReference>
<dbReference type="NCBIfam" id="TIGR00091">
    <property type="entry name" value="tRNA (guanosine(46)-N7)-methyltransferase TrmB"/>
    <property type="match status" value="1"/>
</dbReference>
<dbReference type="PANTHER" id="PTHR23417">
    <property type="entry name" value="3-DEOXY-D-MANNO-OCTULOSONIC-ACID TRANSFERASE/TRNA GUANINE-N 7 - -METHYLTRANSFERASE"/>
    <property type="match status" value="1"/>
</dbReference>
<dbReference type="PANTHER" id="PTHR23417:SF14">
    <property type="entry name" value="PENTACOTRIPEPTIDE-REPEAT REGION OF PRORP DOMAIN-CONTAINING PROTEIN"/>
    <property type="match status" value="1"/>
</dbReference>
<dbReference type="Pfam" id="PF02390">
    <property type="entry name" value="Methyltransf_4"/>
    <property type="match status" value="1"/>
</dbReference>
<dbReference type="SUPFAM" id="SSF53335">
    <property type="entry name" value="S-adenosyl-L-methionine-dependent methyltransferases"/>
    <property type="match status" value="1"/>
</dbReference>
<dbReference type="PROSITE" id="PS51625">
    <property type="entry name" value="SAM_MT_TRMB"/>
    <property type="match status" value="1"/>
</dbReference>
<proteinExistence type="inferred from homology"/>
<accession>A4T3S4</accession>